<sequence length="285" mass="32859">MKEREEIVNSDILEEFATYLELEGKSKNTIRMYTYYLSKFFEEGYSPTARDALKFLAKLRKSGYSIRSLNLVIQALKSYFKFEGLDSEAEKLKNPKIPKSLPKSLTEDEVKKIVSVADNLRDKLILLLLYGAGLRVSELCNLKIEDVNFEKSFLIVRGGKGGKDRVIPISKTLLFEIERYLKTRKDNSPYLFVEKRRNRKDKLSPKTVWMLVKKYGKKVGLNVTPHQLRHSFATHMLERGVDIRIIQELLGHANLSTTQIYTKVTTKHLREAIEKAKLIETILGG</sequence>
<proteinExistence type="inferred from homology"/>
<gene>
    <name evidence="1" type="primary">xerA</name>
    <name type="ordered locus">PH1826</name>
</gene>
<reference key="1">
    <citation type="journal article" date="1998" name="DNA Res.">
        <title>Complete sequence and gene organization of the genome of a hyper-thermophilic archaebacterium, Pyrococcus horikoshii OT3.</title>
        <authorList>
            <person name="Kawarabayasi Y."/>
            <person name="Sawada M."/>
            <person name="Horikawa H."/>
            <person name="Haikawa Y."/>
            <person name="Hino Y."/>
            <person name="Yamamoto S."/>
            <person name="Sekine M."/>
            <person name="Baba S."/>
            <person name="Kosugi H."/>
            <person name="Hosoyama A."/>
            <person name="Nagai Y."/>
            <person name="Sakai M."/>
            <person name="Ogura K."/>
            <person name="Otsuka R."/>
            <person name="Nakazawa H."/>
            <person name="Takamiya M."/>
            <person name="Ohfuku Y."/>
            <person name="Funahashi T."/>
            <person name="Tanaka T."/>
            <person name="Kudoh Y."/>
            <person name="Yamazaki J."/>
            <person name="Kushida N."/>
            <person name="Oguchi A."/>
            <person name="Aoki K."/>
            <person name="Yoshizawa T."/>
            <person name="Nakamura Y."/>
            <person name="Robb F.T."/>
            <person name="Horikoshi K."/>
            <person name="Masuchi Y."/>
            <person name="Shizuya H."/>
            <person name="Kikuchi H."/>
        </authorList>
    </citation>
    <scope>NUCLEOTIDE SEQUENCE [LARGE SCALE GENOMIC DNA]</scope>
    <source>
        <strain>ATCC 700860 / DSM 12428 / JCM 9974 / NBRC 100139 / OT-3</strain>
    </source>
</reference>
<evidence type="ECO:0000255" key="1">
    <source>
        <dbReference type="HAMAP-Rule" id="MF_02055"/>
    </source>
</evidence>
<evidence type="ECO:0000255" key="2">
    <source>
        <dbReference type="PROSITE-ProRule" id="PRU01246"/>
    </source>
</evidence>
<evidence type="ECO:0000255" key="3">
    <source>
        <dbReference type="PROSITE-ProRule" id="PRU01248"/>
    </source>
</evidence>
<protein>
    <recommendedName>
        <fullName evidence="1">Tyrosine recombinase XerA</fullName>
    </recommendedName>
</protein>
<feature type="chain" id="PRO_0000095357" description="Tyrosine recombinase XerA">
    <location>
        <begin position="1"/>
        <end position="285"/>
    </location>
</feature>
<feature type="domain" description="Core-binding (CB)" evidence="3">
    <location>
        <begin position="7"/>
        <end position="84"/>
    </location>
</feature>
<feature type="domain" description="Tyr recombinase" evidence="2">
    <location>
        <begin position="100"/>
        <end position="274"/>
    </location>
</feature>
<feature type="active site" evidence="1">
    <location>
        <position position="135"/>
    </location>
</feature>
<feature type="active site" evidence="1">
    <location>
        <position position="160"/>
    </location>
</feature>
<feature type="active site" evidence="1">
    <location>
        <position position="226"/>
    </location>
</feature>
<feature type="active site" evidence="1">
    <location>
        <position position="229"/>
    </location>
</feature>
<feature type="active site" evidence="1">
    <location>
        <position position="252"/>
    </location>
</feature>
<feature type="active site" description="O-(3'-phospho-DNA)-tyrosine intermediate" evidence="1">
    <location>
        <position position="261"/>
    </location>
</feature>
<dbReference type="EMBL" id="BA000001">
    <property type="protein sequence ID" value="BAA30945.1"/>
    <property type="molecule type" value="Genomic_DNA"/>
</dbReference>
<dbReference type="PIR" id="B71194">
    <property type="entry name" value="B71194"/>
</dbReference>
<dbReference type="RefSeq" id="WP_010885885.1">
    <property type="nucleotide sequence ID" value="NC_000961.1"/>
</dbReference>
<dbReference type="SMR" id="O59490"/>
<dbReference type="STRING" id="70601.gene:9378828"/>
<dbReference type="EnsemblBacteria" id="BAA30945">
    <property type="protein sequence ID" value="BAA30945"/>
    <property type="gene ID" value="BAA30945"/>
</dbReference>
<dbReference type="GeneID" id="1442667"/>
<dbReference type="KEGG" id="pho:PH1826"/>
<dbReference type="eggNOG" id="arCOG01241">
    <property type="taxonomic scope" value="Archaea"/>
</dbReference>
<dbReference type="OrthoDB" id="142231at2157"/>
<dbReference type="Proteomes" id="UP000000752">
    <property type="component" value="Chromosome"/>
</dbReference>
<dbReference type="GO" id="GO:0005737">
    <property type="term" value="C:cytoplasm"/>
    <property type="evidence" value="ECO:0007669"/>
    <property type="project" value="UniProtKB-SubCell"/>
</dbReference>
<dbReference type="GO" id="GO:0003677">
    <property type="term" value="F:DNA binding"/>
    <property type="evidence" value="ECO:0007669"/>
    <property type="project" value="UniProtKB-KW"/>
</dbReference>
<dbReference type="GO" id="GO:0009037">
    <property type="term" value="F:tyrosine-based site-specific recombinase activity"/>
    <property type="evidence" value="ECO:0007669"/>
    <property type="project" value="UniProtKB-UniRule"/>
</dbReference>
<dbReference type="GO" id="GO:0006313">
    <property type="term" value="P:DNA transposition"/>
    <property type="evidence" value="ECO:0007669"/>
    <property type="project" value="UniProtKB-UniRule"/>
</dbReference>
<dbReference type="Gene3D" id="1.10.150.130">
    <property type="match status" value="1"/>
</dbReference>
<dbReference type="Gene3D" id="1.10.443.10">
    <property type="entry name" value="Intergrase catalytic core"/>
    <property type="match status" value="1"/>
</dbReference>
<dbReference type="HAMAP" id="MF_02055">
    <property type="entry name" value="Recomb_XerA"/>
    <property type="match status" value="1"/>
</dbReference>
<dbReference type="InterPro" id="IPR044068">
    <property type="entry name" value="CB"/>
</dbReference>
<dbReference type="InterPro" id="IPR011010">
    <property type="entry name" value="DNA_brk_join_enz"/>
</dbReference>
<dbReference type="InterPro" id="IPR013762">
    <property type="entry name" value="Integrase-like_cat_sf"/>
</dbReference>
<dbReference type="InterPro" id="IPR002104">
    <property type="entry name" value="Integrase_catalytic"/>
</dbReference>
<dbReference type="InterPro" id="IPR010998">
    <property type="entry name" value="Integrase_recombinase_N"/>
</dbReference>
<dbReference type="InterPro" id="IPR004107">
    <property type="entry name" value="Integrase_SAM-like_N"/>
</dbReference>
<dbReference type="InterPro" id="IPR050090">
    <property type="entry name" value="Tyrosine_recombinase_XerCD"/>
</dbReference>
<dbReference type="InterPro" id="IPR033686">
    <property type="entry name" value="XerA"/>
</dbReference>
<dbReference type="NCBIfam" id="NF040815">
    <property type="entry name" value="recomb_XerA_Arch"/>
    <property type="match status" value="1"/>
</dbReference>
<dbReference type="PANTHER" id="PTHR30349:SF41">
    <property type="entry name" value="INTEGRASE_RECOMBINASE PROTEIN MJ0367-RELATED"/>
    <property type="match status" value="1"/>
</dbReference>
<dbReference type="PANTHER" id="PTHR30349">
    <property type="entry name" value="PHAGE INTEGRASE-RELATED"/>
    <property type="match status" value="1"/>
</dbReference>
<dbReference type="Pfam" id="PF02899">
    <property type="entry name" value="Phage_int_SAM_1"/>
    <property type="match status" value="1"/>
</dbReference>
<dbReference type="Pfam" id="PF00589">
    <property type="entry name" value="Phage_integrase"/>
    <property type="match status" value="1"/>
</dbReference>
<dbReference type="SUPFAM" id="SSF56349">
    <property type="entry name" value="DNA breaking-rejoining enzymes"/>
    <property type="match status" value="1"/>
</dbReference>
<dbReference type="PROSITE" id="PS51900">
    <property type="entry name" value="CB"/>
    <property type="match status" value="1"/>
</dbReference>
<dbReference type="PROSITE" id="PS51898">
    <property type="entry name" value="TYR_RECOMBINASE"/>
    <property type="match status" value="1"/>
</dbReference>
<keyword id="KW-0963">Cytoplasm</keyword>
<keyword id="KW-0229">DNA integration</keyword>
<keyword id="KW-0233">DNA recombination</keyword>
<keyword id="KW-0238">DNA-binding</keyword>
<comment type="function">
    <text evidence="1">Site-specific tyrosine recombinase, which acts by catalyzing the cutting and rejoining of the recombining DNA molecules.</text>
</comment>
<comment type="subcellular location">
    <subcellularLocation>
        <location evidence="1">Cytoplasm</location>
    </subcellularLocation>
</comment>
<comment type="similarity">
    <text evidence="1">Belongs to the 'phage' integrase family. XerA subfamily.</text>
</comment>
<accession>O59490</accession>
<name>XERA_PYRHO</name>
<organism>
    <name type="scientific">Pyrococcus horikoshii (strain ATCC 700860 / DSM 12428 / JCM 9974 / NBRC 100139 / OT-3)</name>
    <dbReference type="NCBI Taxonomy" id="70601"/>
    <lineage>
        <taxon>Archaea</taxon>
        <taxon>Methanobacteriati</taxon>
        <taxon>Methanobacteriota</taxon>
        <taxon>Thermococci</taxon>
        <taxon>Thermococcales</taxon>
        <taxon>Thermococcaceae</taxon>
        <taxon>Pyrococcus</taxon>
    </lineage>
</organism>